<accession>A0RZA3</accession>
<name>RL37_CENSY</name>
<feature type="chain" id="PRO_1000146604" description="Large ribosomal subunit protein eL37">
    <location>
        <begin position="1"/>
        <end position="55"/>
    </location>
</feature>
<feature type="zinc finger region" description="C4-type" evidence="1">
    <location>
        <begin position="20"/>
        <end position="38"/>
    </location>
</feature>
<feature type="binding site" evidence="1">
    <location>
        <position position="20"/>
    </location>
    <ligand>
        <name>Zn(2+)</name>
        <dbReference type="ChEBI" id="CHEBI:29105"/>
    </ligand>
</feature>
<feature type="binding site" evidence="1">
    <location>
        <position position="23"/>
    </location>
    <ligand>
        <name>Zn(2+)</name>
        <dbReference type="ChEBI" id="CHEBI:29105"/>
    </ligand>
</feature>
<feature type="binding site" evidence="1">
    <location>
        <position position="35"/>
    </location>
    <ligand>
        <name>Zn(2+)</name>
        <dbReference type="ChEBI" id="CHEBI:29105"/>
    </ligand>
</feature>
<feature type="binding site" evidence="1">
    <location>
        <position position="38"/>
    </location>
    <ligand>
        <name>Zn(2+)</name>
        <dbReference type="ChEBI" id="CHEBI:29105"/>
    </ligand>
</feature>
<dbReference type="EMBL" id="DP000238">
    <property type="protein sequence ID" value="ABK76686.1"/>
    <property type="molecule type" value="Genomic_DNA"/>
</dbReference>
<dbReference type="SMR" id="A0RZA3"/>
<dbReference type="STRING" id="414004.CENSYa_0036"/>
<dbReference type="EnsemblBacteria" id="ABK76686">
    <property type="protein sequence ID" value="ABK76686"/>
    <property type="gene ID" value="CENSYa_0036"/>
</dbReference>
<dbReference type="KEGG" id="csy:CENSYa_0036"/>
<dbReference type="PATRIC" id="fig|414004.10.peg.29"/>
<dbReference type="HOGENOM" id="CLU_208825_0_0_2"/>
<dbReference type="Proteomes" id="UP000000758">
    <property type="component" value="Chromosome"/>
</dbReference>
<dbReference type="GO" id="GO:0022625">
    <property type="term" value="C:cytosolic large ribosomal subunit"/>
    <property type="evidence" value="ECO:0007669"/>
    <property type="project" value="TreeGrafter"/>
</dbReference>
<dbReference type="GO" id="GO:0019843">
    <property type="term" value="F:rRNA binding"/>
    <property type="evidence" value="ECO:0007669"/>
    <property type="project" value="UniProtKB-KW"/>
</dbReference>
<dbReference type="GO" id="GO:0003735">
    <property type="term" value="F:structural constituent of ribosome"/>
    <property type="evidence" value="ECO:0007669"/>
    <property type="project" value="InterPro"/>
</dbReference>
<dbReference type="GO" id="GO:0008270">
    <property type="term" value="F:zinc ion binding"/>
    <property type="evidence" value="ECO:0007669"/>
    <property type="project" value="UniProtKB-UniRule"/>
</dbReference>
<dbReference type="GO" id="GO:0006412">
    <property type="term" value="P:translation"/>
    <property type="evidence" value="ECO:0007669"/>
    <property type="project" value="UniProtKB-UniRule"/>
</dbReference>
<dbReference type="Gene3D" id="2.20.25.30">
    <property type="match status" value="1"/>
</dbReference>
<dbReference type="HAMAP" id="MF_00547">
    <property type="entry name" value="Ribosomal_eL37"/>
    <property type="match status" value="1"/>
</dbReference>
<dbReference type="InterPro" id="IPR001569">
    <property type="entry name" value="Ribosomal_eL37"/>
</dbReference>
<dbReference type="InterPro" id="IPR011331">
    <property type="entry name" value="Ribosomal_eL37/eL43"/>
</dbReference>
<dbReference type="InterPro" id="IPR011332">
    <property type="entry name" value="Ribosomal_zn-bd"/>
</dbReference>
<dbReference type="NCBIfam" id="NF003214">
    <property type="entry name" value="PRK04179.1"/>
    <property type="match status" value="1"/>
</dbReference>
<dbReference type="PANTHER" id="PTHR10768">
    <property type="entry name" value="60S RIBOSOMAL PROTEIN L37"/>
    <property type="match status" value="1"/>
</dbReference>
<dbReference type="PANTHER" id="PTHR10768:SF0">
    <property type="entry name" value="RIBOSOMAL PROTEIN L37"/>
    <property type="match status" value="1"/>
</dbReference>
<dbReference type="Pfam" id="PF01907">
    <property type="entry name" value="Ribosomal_L37e"/>
    <property type="match status" value="1"/>
</dbReference>
<dbReference type="SUPFAM" id="SSF57829">
    <property type="entry name" value="Zn-binding ribosomal proteins"/>
    <property type="match status" value="1"/>
</dbReference>
<organism>
    <name type="scientific">Cenarchaeum symbiosum (strain A)</name>
    <dbReference type="NCBI Taxonomy" id="414004"/>
    <lineage>
        <taxon>Archaea</taxon>
        <taxon>Nitrososphaerota</taxon>
        <taxon>Candidatus Cenarchaeales</taxon>
        <taxon>Candidatus Cenarchaeaceae</taxon>
        <taxon>Candidatus Cenarchaeum</taxon>
    </lineage>
</organism>
<protein>
    <recommendedName>
        <fullName evidence="1">Large ribosomal subunit protein eL37</fullName>
    </recommendedName>
    <alternativeName>
        <fullName evidence="2">50S ribosomal protein L37e</fullName>
    </alternativeName>
</protein>
<reference key="1">
    <citation type="journal article" date="2006" name="Proc. Natl. Acad. Sci. U.S.A.">
        <title>Genomic analysis of the uncultivated marine crenarchaeote Cenarchaeum symbiosum.</title>
        <authorList>
            <person name="Hallam S.J."/>
            <person name="Konstantinidis K.T."/>
            <person name="Putnam N."/>
            <person name="Schleper C."/>
            <person name="Watanabe Y."/>
            <person name="Sugahara J."/>
            <person name="Preston C."/>
            <person name="de la Torre J."/>
            <person name="Richardson P.M."/>
            <person name="DeLong E.F."/>
        </authorList>
    </citation>
    <scope>NUCLEOTIDE SEQUENCE [LARGE SCALE GENOMIC DNA]</scope>
    <source>
        <strain>A</strain>
    </source>
</reference>
<proteinExistence type="inferred from homology"/>
<keyword id="KW-0479">Metal-binding</keyword>
<keyword id="KW-1185">Reference proteome</keyword>
<keyword id="KW-0687">Ribonucleoprotein</keyword>
<keyword id="KW-0689">Ribosomal protein</keyword>
<keyword id="KW-0694">RNA-binding</keyword>
<keyword id="KW-0699">rRNA-binding</keyword>
<keyword id="KW-0862">Zinc</keyword>
<keyword id="KW-0863">Zinc-finger</keyword>
<comment type="function">
    <text evidence="1">Binds to the 23S rRNA.</text>
</comment>
<comment type="cofactor">
    <cofactor evidence="1">
        <name>Zn(2+)</name>
        <dbReference type="ChEBI" id="CHEBI:29105"/>
    </cofactor>
    <text evidence="1">Binds 1 zinc ion per subunit.</text>
</comment>
<comment type="similarity">
    <text evidence="1">Belongs to the eukaryotic ribosomal protein eL37 family.</text>
</comment>
<gene>
    <name evidence="1" type="primary">rpl37e</name>
    <name type="ordered locus">CENSYa_0036</name>
</gene>
<evidence type="ECO:0000255" key="1">
    <source>
        <dbReference type="HAMAP-Rule" id="MF_00547"/>
    </source>
</evidence>
<evidence type="ECO:0000305" key="2"/>
<sequence>MVKGTTSMGGFTRKHVHIRCRRCGKNSYHKRHHRCSSCGFPDAKIRKYSWVKWYT</sequence>